<organism>
    <name type="scientific">Saccharomyces cerevisiae (strain ATCC 204508 / S288c)</name>
    <name type="common">Baker's yeast</name>
    <dbReference type="NCBI Taxonomy" id="559292"/>
    <lineage>
        <taxon>Eukaryota</taxon>
        <taxon>Fungi</taxon>
        <taxon>Dikarya</taxon>
        <taxon>Ascomycota</taxon>
        <taxon>Saccharomycotina</taxon>
        <taxon>Saccharomycetes</taxon>
        <taxon>Saccharomycetales</taxon>
        <taxon>Saccharomycetaceae</taxon>
        <taxon>Saccharomyces</taxon>
    </lineage>
</organism>
<name>YN77_YEAST</name>
<accession>P53821</accession>
<accession>E9PAG2</accession>
<gene>
    <name type="ordered locus">YNL337W</name>
    <name type="ORF">N0172</name>
</gene>
<sequence length="84" mass="9700">MHGTCLSGLYPVPFTHNSHDYPHFNIYISFGGPKYCITALNTYVTPLLHRILTTQFIYTYANITKKSPLKSPKHKNILFFNHNT</sequence>
<reference key="1">
    <citation type="journal article" date="1997" name="Nature">
        <title>The nucleotide sequence of Saccharomyces cerevisiae chromosome XIV and its evolutionary implications.</title>
        <authorList>
            <person name="Philippsen P."/>
            <person name="Kleine K."/>
            <person name="Poehlmann R."/>
            <person name="Duesterhoeft A."/>
            <person name="Hamberg K."/>
            <person name="Hegemann J.H."/>
            <person name="Obermaier B."/>
            <person name="Urrestarazu L.A."/>
            <person name="Aert R."/>
            <person name="Albermann K."/>
            <person name="Altmann R."/>
            <person name="Andre B."/>
            <person name="Baladron V."/>
            <person name="Ballesta J.P.G."/>
            <person name="Becam A.-M."/>
            <person name="Beinhauer J.D."/>
            <person name="Boskovic J."/>
            <person name="Buitrago M.J."/>
            <person name="Bussereau F."/>
            <person name="Coster F."/>
            <person name="Crouzet M."/>
            <person name="D'Angelo M."/>
            <person name="Dal Pero F."/>
            <person name="De Antoni A."/>
            <person name="del Rey F."/>
            <person name="Doignon F."/>
            <person name="Domdey H."/>
            <person name="Dubois E."/>
            <person name="Fiedler T.A."/>
            <person name="Fleig U."/>
            <person name="Floeth M."/>
            <person name="Fritz C."/>
            <person name="Gaillardin C."/>
            <person name="Garcia-Cantalejo J.M."/>
            <person name="Glansdorff N."/>
            <person name="Goffeau A."/>
            <person name="Gueldener U."/>
            <person name="Herbert C.J."/>
            <person name="Heumann K."/>
            <person name="Heuss-Neitzel D."/>
            <person name="Hilbert H."/>
            <person name="Hinni K."/>
            <person name="Iraqui Houssaini I."/>
            <person name="Jacquet M."/>
            <person name="Jimenez A."/>
            <person name="Jonniaux J.-L."/>
            <person name="Karpfinger-Hartl L."/>
            <person name="Lanfranchi G."/>
            <person name="Lepingle A."/>
            <person name="Levesque H."/>
            <person name="Lyck R."/>
            <person name="Maftahi M."/>
            <person name="Mallet L."/>
            <person name="Maurer C.T.C."/>
            <person name="Messenguy F."/>
            <person name="Mewes H.-W."/>
            <person name="Moestl D."/>
            <person name="Nasr F."/>
            <person name="Nicaud J.-M."/>
            <person name="Niedenthal R.K."/>
            <person name="Pandolfo D."/>
            <person name="Pierard A."/>
            <person name="Piravandi E."/>
            <person name="Planta R.J."/>
            <person name="Pohl T.M."/>
            <person name="Purnelle B."/>
            <person name="Rebischung C."/>
            <person name="Remacha M.A."/>
            <person name="Revuelta J.L."/>
            <person name="Rinke M."/>
            <person name="Saiz J.E."/>
            <person name="Sartorello F."/>
            <person name="Scherens B."/>
            <person name="Sen-Gupta M."/>
            <person name="Soler-Mira A."/>
            <person name="Urbanus J.H.M."/>
            <person name="Valle G."/>
            <person name="Van Dyck L."/>
            <person name="Verhasselt P."/>
            <person name="Vierendeels F."/>
            <person name="Vissers S."/>
            <person name="Voet M."/>
            <person name="Volckaert G."/>
            <person name="Wach A."/>
            <person name="Wambutt R."/>
            <person name="Wedler H."/>
            <person name="Zollner A."/>
            <person name="Hani J."/>
        </authorList>
    </citation>
    <scope>NUCLEOTIDE SEQUENCE [LARGE SCALE GENOMIC DNA]</scope>
    <source>
        <strain>ATCC 204508 / S288c</strain>
    </source>
</reference>
<reference key="2">
    <citation type="journal article" date="2014" name="G3 (Bethesda)">
        <title>The reference genome sequence of Saccharomyces cerevisiae: Then and now.</title>
        <authorList>
            <person name="Engel S.R."/>
            <person name="Dietrich F.S."/>
            <person name="Fisk D.G."/>
            <person name="Binkley G."/>
            <person name="Balakrishnan R."/>
            <person name="Costanzo M.C."/>
            <person name="Dwight S.S."/>
            <person name="Hitz B.C."/>
            <person name="Karra K."/>
            <person name="Nash R.S."/>
            <person name="Weng S."/>
            <person name="Wong E.D."/>
            <person name="Lloyd P."/>
            <person name="Skrzypek M.S."/>
            <person name="Miyasato S.R."/>
            <person name="Simison M."/>
            <person name="Cherry J.M."/>
        </authorList>
    </citation>
    <scope>GENOME REANNOTATION</scope>
    <source>
        <strain>ATCC 204508 / S288c</strain>
    </source>
</reference>
<feature type="chain" id="PRO_0000211377" description="Putative UPF0320 protein YNL337W">
    <location>
        <begin position="1"/>
        <end position="84"/>
    </location>
</feature>
<proteinExistence type="uncertain"/>
<protein>
    <recommendedName>
        <fullName>Putative UPF0320 protein YNL337W</fullName>
    </recommendedName>
</protein>
<evidence type="ECO:0000305" key="1"/>
<evidence type="ECO:0000305" key="2">
    <source>
    </source>
</evidence>
<dbReference type="EMBL" id="Z71613">
    <property type="protein sequence ID" value="CAA96272.1"/>
    <property type="molecule type" value="Genomic_DNA"/>
</dbReference>
<dbReference type="EMBL" id="Z71612">
    <property type="protein sequence ID" value="CAA96271.2"/>
    <property type="molecule type" value="Genomic_DNA"/>
</dbReference>
<dbReference type="PIR" id="S63323">
    <property type="entry name" value="S63323"/>
</dbReference>
<dbReference type="STRING" id="4932.YNL337W"/>
<dbReference type="PaxDb" id="4932-YNL337W"/>
<dbReference type="EnsemblFungi" id="YNL337W_mRNA">
    <property type="protein sequence ID" value="YNL337W"/>
    <property type="gene ID" value="YNL337W"/>
</dbReference>
<dbReference type="AGR" id="SGD:S000005281"/>
<dbReference type="SGD" id="S000005281">
    <property type="gene designation" value="YNL337W"/>
</dbReference>
<dbReference type="GeneTree" id="ENSGT00940000177535"/>
<dbReference type="HOGENOM" id="CLU_164954_0_0_1"/>
<dbReference type="InterPro" id="IPR007414">
    <property type="entry name" value="DUF468"/>
</dbReference>
<dbReference type="Pfam" id="PF04318">
    <property type="entry name" value="DUF468"/>
    <property type="match status" value="1"/>
</dbReference>
<comment type="miscellaneous">
    <text evidence="1">Contained within a telomeric X element core sequence.</text>
</comment>
<comment type="similarity">
    <text evidence="1">Belongs to the UPF0320 family.</text>
</comment>
<comment type="caution">
    <text evidence="2">Product of a dubious gene prediction unlikely to encode a functional protein. Because of that it is not part of the S.cerevisiae S288c complete/reference proteome set.</text>
</comment>